<proteinExistence type="inferred from homology"/>
<organism>
    <name type="scientific">Escherichia coli O157:H7</name>
    <dbReference type="NCBI Taxonomy" id="83334"/>
    <lineage>
        <taxon>Bacteria</taxon>
        <taxon>Pseudomonadati</taxon>
        <taxon>Pseudomonadota</taxon>
        <taxon>Gammaproteobacteria</taxon>
        <taxon>Enterobacterales</taxon>
        <taxon>Enterobacteriaceae</taxon>
        <taxon>Escherichia</taxon>
    </lineage>
</organism>
<accession>Q8X736</accession>
<sequence length="213" mass="22947">MAKNYYDITLALAGICQSARLVQQLAHQGHCDADALHVSLNSIIDMNPSSTLAVFGGSEANLRVGLETLLGVLNASSRQGLNAELTRYTLSLMVLKRKLSSAKGALDTLGNRINGLQRQLEHFDLQSETLMSAMAAIYVDVISPLGPRIQVTGSPAVLQSPQVQAKVRATLLAGIRAAVLWHQVGGGRLQLMFSRNRLTTQAKQILAHLTPEL</sequence>
<reference key="1">
    <citation type="journal article" date="2001" name="Nature">
        <title>Genome sequence of enterohaemorrhagic Escherichia coli O157:H7.</title>
        <authorList>
            <person name="Perna N.T."/>
            <person name="Plunkett G. III"/>
            <person name="Burland V."/>
            <person name="Mau B."/>
            <person name="Glasner J.D."/>
            <person name="Rose D.J."/>
            <person name="Mayhew G.F."/>
            <person name="Evans P.S."/>
            <person name="Gregor J."/>
            <person name="Kirkpatrick H.A."/>
            <person name="Posfai G."/>
            <person name="Hackett J."/>
            <person name="Klink S."/>
            <person name="Boutin A."/>
            <person name="Shao Y."/>
            <person name="Miller L."/>
            <person name="Grotbeck E.J."/>
            <person name="Davis N.W."/>
            <person name="Lim A."/>
            <person name="Dimalanta E.T."/>
            <person name="Potamousis K."/>
            <person name="Apodaca J."/>
            <person name="Anantharaman T.S."/>
            <person name="Lin J."/>
            <person name="Yen G."/>
            <person name="Schwartz D.C."/>
            <person name="Welch R.A."/>
            <person name="Blattner F.R."/>
        </authorList>
    </citation>
    <scope>NUCLEOTIDE SEQUENCE [LARGE SCALE GENOMIC DNA]</scope>
    <source>
        <strain>O157:H7 / EDL933 / ATCC 700927 / EHEC</strain>
    </source>
</reference>
<reference key="2">
    <citation type="journal article" date="2001" name="DNA Res.">
        <title>Complete genome sequence of enterohemorrhagic Escherichia coli O157:H7 and genomic comparison with a laboratory strain K-12.</title>
        <authorList>
            <person name="Hayashi T."/>
            <person name="Makino K."/>
            <person name="Ohnishi M."/>
            <person name="Kurokawa K."/>
            <person name="Ishii K."/>
            <person name="Yokoyama K."/>
            <person name="Han C.-G."/>
            <person name="Ohtsubo E."/>
            <person name="Nakayama K."/>
            <person name="Murata T."/>
            <person name="Tanaka M."/>
            <person name="Tobe T."/>
            <person name="Iida T."/>
            <person name="Takami H."/>
            <person name="Honda T."/>
            <person name="Sasakawa C."/>
            <person name="Ogasawara N."/>
            <person name="Yasunaga T."/>
            <person name="Kuhara S."/>
            <person name="Shiba T."/>
            <person name="Hattori M."/>
            <person name="Shinagawa H."/>
        </authorList>
    </citation>
    <scope>NUCLEOTIDE SEQUENCE [LARGE SCALE GENOMIC DNA]</scope>
    <source>
        <strain>O157:H7 / Sakai / RIMD 0509952 / EHEC</strain>
    </source>
</reference>
<evidence type="ECO:0000255" key="1">
    <source>
        <dbReference type="HAMAP-Rule" id="MF_00695"/>
    </source>
</evidence>
<protein>
    <recommendedName>
        <fullName evidence="1">High frequency lysogenization protein HflD</fullName>
    </recommendedName>
</protein>
<feature type="chain" id="PRO_0000071578" description="High frequency lysogenization protein HflD">
    <location>
        <begin position="1"/>
        <end position="213"/>
    </location>
</feature>
<feature type="coiled-coil region" evidence="1">
    <location>
        <begin position="99"/>
        <end position="126"/>
    </location>
</feature>
<gene>
    <name evidence="1" type="primary">hflD</name>
    <name type="ordered locus">Z1861</name>
    <name type="ordered locus">ECs1604</name>
</gene>
<comment type="function">
    <text evidence="1">Negative regulator of phage lambda lysogenization. Contributes to the degradation of the phage regulatory protein CII. Acts probably by holding CII on the membrane surface, away from the target promoters, but close to the FtsH protease.</text>
</comment>
<comment type="subunit">
    <text evidence="1">Interacts with CII protein from phage lambda.</text>
</comment>
<comment type="subcellular location">
    <subcellularLocation>
        <location>Cytoplasm</location>
    </subcellularLocation>
    <subcellularLocation>
        <location evidence="1">Cell inner membrane</location>
        <topology evidence="1">Peripheral membrane protein</topology>
        <orientation evidence="1">Cytoplasmic side</orientation>
    </subcellularLocation>
</comment>
<comment type="similarity">
    <text evidence="1">Belongs to the HflD family.</text>
</comment>
<keyword id="KW-0997">Cell inner membrane</keyword>
<keyword id="KW-1003">Cell membrane</keyword>
<keyword id="KW-0175">Coiled coil</keyword>
<keyword id="KW-0963">Cytoplasm</keyword>
<keyword id="KW-0472">Membrane</keyword>
<keyword id="KW-1185">Reference proteome</keyword>
<name>HFLD_ECO57</name>
<dbReference type="EMBL" id="AE005174">
    <property type="protein sequence ID" value="AAG55958.1"/>
    <property type="molecule type" value="Genomic_DNA"/>
</dbReference>
<dbReference type="EMBL" id="BA000007">
    <property type="protein sequence ID" value="BAB35027.1"/>
    <property type="molecule type" value="Genomic_DNA"/>
</dbReference>
<dbReference type="PIR" id="B85687">
    <property type="entry name" value="B85687"/>
</dbReference>
<dbReference type="PIR" id="D90829">
    <property type="entry name" value="D90829"/>
</dbReference>
<dbReference type="RefSeq" id="NP_309631.1">
    <property type="nucleotide sequence ID" value="NC_002695.1"/>
</dbReference>
<dbReference type="RefSeq" id="WP_001301618.1">
    <property type="nucleotide sequence ID" value="NZ_VOAI01000035.1"/>
</dbReference>
<dbReference type="SMR" id="Q8X736"/>
<dbReference type="STRING" id="155864.Z1861"/>
<dbReference type="GeneID" id="913287"/>
<dbReference type="KEGG" id="ece:Z1861"/>
<dbReference type="KEGG" id="ecs:ECs_1604"/>
<dbReference type="PATRIC" id="fig|386585.9.peg.1704"/>
<dbReference type="eggNOG" id="COG2915">
    <property type="taxonomic scope" value="Bacteria"/>
</dbReference>
<dbReference type="HOGENOM" id="CLU_098920_0_0_6"/>
<dbReference type="OMA" id="RYIISLM"/>
<dbReference type="Proteomes" id="UP000000558">
    <property type="component" value="Chromosome"/>
</dbReference>
<dbReference type="Proteomes" id="UP000002519">
    <property type="component" value="Chromosome"/>
</dbReference>
<dbReference type="GO" id="GO:0005737">
    <property type="term" value="C:cytoplasm"/>
    <property type="evidence" value="ECO:0007669"/>
    <property type="project" value="UniProtKB-SubCell"/>
</dbReference>
<dbReference type="GO" id="GO:0005886">
    <property type="term" value="C:plasma membrane"/>
    <property type="evidence" value="ECO:0007669"/>
    <property type="project" value="UniProtKB-SubCell"/>
</dbReference>
<dbReference type="FunFam" id="1.10.3890.10:FF:000001">
    <property type="entry name" value="High frequency lysogenization protein HflD homolog"/>
    <property type="match status" value="1"/>
</dbReference>
<dbReference type="Gene3D" id="1.10.3890.10">
    <property type="entry name" value="HflD-like"/>
    <property type="match status" value="1"/>
</dbReference>
<dbReference type="HAMAP" id="MF_00695">
    <property type="entry name" value="HflD_protein"/>
    <property type="match status" value="1"/>
</dbReference>
<dbReference type="InterPro" id="IPR007451">
    <property type="entry name" value="HflD"/>
</dbReference>
<dbReference type="InterPro" id="IPR035932">
    <property type="entry name" value="HflD-like_sf"/>
</dbReference>
<dbReference type="NCBIfam" id="NF001245">
    <property type="entry name" value="PRK00218.1-1"/>
    <property type="match status" value="1"/>
</dbReference>
<dbReference type="NCBIfam" id="NF001246">
    <property type="entry name" value="PRK00218.1-2"/>
    <property type="match status" value="1"/>
</dbReference>
<dbReference type="NCBIfam" id="NF001248">
    <property type="entry name" value="PRK00218.1-4"/>
    <property type="match status" value="1"/>
</dbReference>
<dbReference type="NCBIfam" id="NF001249">
    <property type="entry name" value="PRK00218.1-5"/>
    <property type="match status" value="1"/>
</dbReference>
<dbReference type="PANTHER" id="PTHR38100">
    <property type="entry name" value="HIGH FREQUENCY LYSOGENIZATION PROTEIN HFLD"/>
    <property type="match status" value="1"/>
</dbReference>
<dbReference type="PANTHER" id="PTHR38100:SF1">
    <property type="entry name" value="HIGH FREQUENCY LYSOGENIZATION PROTEIN HFLD"/>
    <property type="match status" value="1"/>
</dbReference>
<dbReference type="Pfam" id="PF04356">
    <property type="entry name" value="DUF489"/>
    <property type="match status" value="1"/>
</dbReference>
<dbReference type="SUPFAM" id="SSF101322">
    <property type="entry name" value="YcfC-like"/>
    <property type="match status" value="1"/>
</dbReference>